<comment type="function">
    <text evidence="1">Transfers an acetyl group from acetyl-CoA to L-homoserine, forming acetyl-L-homoserine.</text>
</comment>
<comment type="catalytic activity">
    <reaction evidence="1">
        <text>L-homoserine + acetyl-CoA = O-acetyl-L-homoserine + CoA</text>
        <dbReference type="Rhea" id="RHEA:13701"/>
        <dbReference type="ChEBI" id="CHEBI:57287"/>
        <dbReference type="ChEBI" id="CHEBI:57288"/>
        <dbReference type="ChEBI" id="CHEBI:57476"/>
        <dbReference type="ChEBI" id="CHEBI:57716"/>
        <dbReference type="EC" id="2.3.1.31"/>
    </reaction>
</comment>
<comment type="pathway">
    <text evidence="1">Amino-acid biosynthesis; L-methionine biosynthesis via de novo pathway; O-acetyl-L-homoserine from L-homoserine: step 1/1.</text>
</comment>
<comment type="subcellular location">
    <subcellularLocation>
        <location evidence="1">Cytoplasm</location>
    </subcellularLocation>
</comment>
<comment type="similarity">
    <text evidence="1">Belongs to the MetA family.</text>
</comment>
<organism>
    <name type="scientific">Streptococcus pneumoniae (strain Hungary19A-6)</name>
    <dbReference type="NCBI Taxonomy" id="487214"/>
    <lineage>
        <taxon>Bacteria</taxon>
        <taxon>Bacillati</taxon>
        <taxon>Bacillota</taxon>
        <taxon>Bacilli</taxon>
        <taxon>Lactobacillales</taxon>
        <taxon>Streptococcaceae</taxon>
        <taxon>Streptococcus</taxon>
    </lineage>
</organism>
<name>METAA_STRPI</name>
<protein>
    <recommendedName>
        <fullName evidence="1">Homoserine O-acetyltransferase</fullName>
        <shortName evidence="1">HAT</shortName>
        <ecNumber evidence="1">2.3.1.31</ecNumber>
    </recommendedName>
    <alternativeName>
        <fullName evidence="1">Homoserine transacetylase</fullName>
        <shortName evidence="1">HTA</shortName>
    </alternativeName>
</protein>
<accession>B1ICZ6</accession>
<gene>
    <name evidence="1" type="primary">metAA</name>
    <name type="ordered locus">SPH_1690</name>
</gene>
<evidence type="ECO:0000255" key="1">
    <source>
        <dbReference type="HAMAP-Rule" id="MF_00295"/>
    </source>
</evidence>
<sequence>MPIRIDKKLPAVEILRTENIFVMDDQRAAHQDIRPLKILILNLMPQKMVTETQLLRHLANTPLQLDIDFLYMESHRSKTTRSEHMETFYKTFPEVKDEYFDGMIITGAPVEHLPFEEVDYWEEFRQMLEWSKTHVYSTLHICWGAQAGLYLRYGVEKYQMDSKLSGIYPQDTLKEGHLLFRGFDDSYVSPHSRHTEISKEEVLNKTNLEILSEGPQVGVSILASRDLREIYSFGHLEYDRDTLAKEYFRDRDAGFDPHIPENYFKDDDVNQVPCLCWSSSAALFFSNWVNHAVYQETPFDWRKIEDDASAYGYL</sequence>
<feature type="chain" id="PRO_1000115198" description="Homoserine O-acetyltransferase">
    <location>
        <begin position="1"/>
        <end position="314"/>
    </location>
</feature>
<feature type="active site" description="Acyl-thioester intermediate" evidence="1">
    <location>
        <position position="142"/>
    </location>
</feature>
<feature type="active site" description="Proton acceptor" evidence="1">
    <location>
        <position position="235"/>
    </location>
</feature>
<feature type="active site" evidence="1">
    <location>
        <position position="237"/>
    </location>
</feature>
<feature type="binding site" evidence="1">
    <location>
        <position position="163"/>
    </location>
    <ligand>
        <name>substrate</name>
    </ligand>
</feature>
<feature type="binding site" evidence="1">
    <location>
        <position position="192"/>
    </location>
    <ligand>
        <name>substrate</name>
    </ligand>
</feature>
<feature type="binding site" evidence="1">
    <location>
        <position position="249"/>
    </location>
    <ligand>
        <name>substrate</name>
    </ligand>
</feature>
<feature type="site" description="Important for acyl-CoA specificity" evidence="1">
    <location>
        <position position="111"/>
    </location>
</feature>
<feature type="site" description="Important for substrate specificity" evidence="1">
    <location>
        <position position="192"/>
    </location>
</feature>
<keyword id="KW-0012">Acyltransferase</keyword>
<keyword id="KW-0028">Amino-acid biosynthesis</keyword>
<keyword id="KW-0963">Cytoplasm</keyword>
<keyword id="KW-0486">Methionine biosynthesis</keyword>
<keyword id="KW-0808">Transferase</keyword>
<proteinExistence type="inferred from homology"/>
<reference key="1">
    <citation type="journal article" date="2010" name="Genome Biol.">
        <title>Structure and dynamics of the pan-genome of Streptococcus pneumoniae and closely related species.</title>
        <authorList>
            <person name="Donati C."/>
            <person name="Hiller N.L."/>
            <person name="Tettelin H."/>
            <person name="Muzzi A."/>
            <person name="Croucher N.J."/>
            <person name="Angiuoli S.V."/>
            <person name="Oggioni M."/>
            <person name="Dunning Hotopp J.C."/>
            <person name="Hu F.Z."/>
            <person name="Riley D.R."/>
            <person name="Covacci A."/>
            <person name="Mitchell T.J."/>
            <person name="Bentley S.D."/>
            <person name="Kilian M."/>
            <person name="Ehrlich G.D."/>
            <person name="Rappuoli R."/>
            <person name="Moxon E.R."/>
            <person name="Masignani V."/>
        </authorList>
    </citation>
    <scope>NUCLEOTIDE SEQUENCE [LARGE SCALE GENOMIC DNA]</scope>
    <source>
        <strain>Hungary19A-6</strain>
    </source>
</reference>
<dbReference type="EC" id="2.3.1.31" evidence="1"/>
<dbReference type="EMBL" id="CP000936">
    <property type="protein sequence ID" value="ACA36122.1"/>
    <property type="molecule type" value="Genomic_DNA"/>
</dbReference>
<dbReference type="SMR" id="B1ICZ6"/>
<dbReference type="KEGG" id="spv:SPH_1690"/>
<dbReference type="HOGENOM" id="CLU_057851_0_1_9"/>
<dbReference type="UniPathway" id="UPA00051">
    <property type="reaction ID" value="UER00074"/>
</dbReference>
<dbReference type="Proteomes" id="UP000002163">
    <property type="component" value="Chromosome"/>
</dbReference>
<dbReference type="GO" id="GO:0005737">
    <property type="term" value="C:cytoplasm"/>
    <property type="evidence" value="ECO:0007669"/>
    <property type="project" value="UniProtKB-SubCell"/>
</dbReference>
<dbReference type="GO" id="GO:0004414">
    <property type="term" value="F:homoserine O-acetyltransferase activity"/>
    <property type="evidence" value="ECO:0007669"/>
    <property type="project" value="UniProtKB-EC"/>
</dbReference>
<dbReference type="GO" id="GO:0008899">
    <property type="term" value="F:homoserine O-succinyltransferase activity"/>
    <property type="evidence" value="ECO:0007669"/>
    <property type="project" value="UniProtKB-UniRule"/>
</dbReference>
<dbReference type="GO" id="GO:0019281">
    <property type="term" value="P:L-methionine biosynthetic process from homoserine via O-succinyl-L-homoserine and cystathionine"/>
    <property type="evidence" value="ECO:0007669"/>
    <property type="project" value="InterPro"/>
</dbReference>
<dbReference type="CDD" id="cd03131">
    <property type="entry name" value="GATase1_HTS"/>
    <property type="match status" value="1"/>
</dbReference>
<dbReference type="FunFam" id="3.40.50.880:FF:000004">
    <property type="entry name" value="Homoserine O-succinyltransferase"/>
    <property type="match status" value="1"/>
</dbReference>
<dbReference type="Gene3D" id="3.40.50.880">
    <property type="match status" value="1"/>
</dbReference>
<dbReference type="HAMAP" id="MF_00295">
    <property type="entry name" value="MetA_acyltransf"/>
    <property type="match status" value="1"/>
</dbReference>
<dbReference type="InterPro" id="IPR029062">
    <property type="entry name" value="Class_I_gatase-like"/>
</dbReference>
<dbReference type="InterPro" id="IPR005697">
    <property type="entry name" value="HST_MetA"/>
</dbReference>
<dbReference type="InterPro" id="IPR033752">
    <property type="entry name" value="MetA_family"/>
</dbReference>
<dbReference type="NCBIfam" id="TIGR01001">
    <property type="entry name" value="metA"/>
    <property type="match status" value="1"/>
</dbReference>
<dbReference type="PANTHER" id="PTHR20919">
    <property type="entry name" value="HOMOSERINE O-SUCCINYLTRANSFERASE"/>
    <property type="match status" value="1"/>
</dbReference>
<dbReference type="PANTHER" id="PTHR20919:SF0">
    <property type="entry name" value="HOMOSERINE O-SUCCINYLTRANSFERASE"/>
    <property type="match status" value="1"/>
</dbReference>
<dbReference type="Pfam" id="PF04204">
    <property type="entry name" value="HTS"/>
    <property type="match status" value="1"/>
</dbReference>
<dbReference type="PIRSF" id="PIRSF000450">
    <property type="entry name" value="H_ser_succinyltr"/>
    <property type="match status" value="1"/>
</dbReference>
<dbReference type="SUPFAM" id="SSF52317">
    <property type="entry name" value="Class I glutamine amidotransferase-like"/>
    <property type="match status" value="1"/>
</dbReference>